<name>MURA_CAUVC</name>
<gene>
    <name evidence="1" type="primary">murA</name>
    <name type="ordered locus">CC_2350</name>
</gene>
<dbReference type="EC" id="2.5.1.7" evidence="1"/>
<dbReference type="EMBL" id="AE005673">
    <property type="protein sequence ID" value="AAK24321.1"/>
    <property type="molecule type" value="Genomic_DNA"/>
</dbReference>
<dbReference type="PIR" id="E87540">
    <property type="entry name" value="E87540"/>
</dbReference>
<dbReference type="RefSeq" id="NP_421153.1">
    <property type="nucleotide sequence ID" value="NC_002696.2"/>
</dbReference>
<dbReference type="RefSeq" id="WP_010920208.1">
    <property type="nucleotide sequence ID" value="NC_002696.2"/>
</dbReference>
<dbReference type="SMR" id="Q9A5U7"/>
<dbReference type="STRING" id="190650.CC_2350"/>
<dbReference type="EnsemblBacteria" id="AAK24321">
    <property type="protein sequence ID" value="AAK24321"/>
    <property type="gene ID" value="CC_2350"/>
</dbReference>
<dbReference type="KEGG" id="ccr:CC_2350"/>
<dbReference type="PATRIC" id="fig|190650.5.peg.2371"/>
<dbReference type="eggNOG" id="COG0766">
    <property type="taxonomic scope" value="Bacteria"/>
</dbReference>
<dbReference type="HOGENOM" id="CLU_027387_0_0_5"/>
<dbReference type="BioCyc" id="CAULO:CC2350-MONOMER"/>
<dbReference type="UniPathway" id="UPA00219"/>
<dbReference type="Proteomes" id="UP000001816">
    <property type="component" value="Chromosome"/>
</dbReference>
<dbReference type="GO" id="GO:0005737">
    <property type="term" value="C:cytoplasm"/>
    <property type="evidence" value="ECO:0007669"/>
    <property type="project" value="UniProtKB-SubCell"/>
</dbReference>
<dbReference type="GO" id="GO:0008760">
    <property type="term" value="F:UDP-N-acetylglucosamine 1-carboxyvinyltransferase activity"/>
    <property type="evidence" value="ECO:0007669"/>
    <property type="project" value="UniProtKB-UniRule"/>
</dbReference>
<dbReference type="GO" id="GO:0051301">
    <property type="term" value="P:cell division"/>
    <property type="evidence" value="ECO:0007669"/>
    <property type="project" value="UniProtKB-KW"/>
</dbReference>
<dbReference type="GO" id="GO:0071555">
    <property type="term" value="P:cell wall organization"/>
    <property type="evidence" value="ECO:0007669"/>
    <property type="project" value="UniProtKB-KW"/>
</dbReference>
<dbReference type="GO" id="GO:0009252">
    <property type="term" value="P:peptidoglycan biosynthetic process"/>
    <property type="evidence" value="ECO:0007669"/>
    <property type="project" value="UniProtKB-UniRule"/>
</dbReference>
<dbReference type="GO" id="GO:0008360">
    <property type="term" value="P:regulation of cell shape"/>
    <property type="evidence" value="ECO:0007669"/>
    <property type="project" value="UniProtKB-KW"/>
</dbReference>
<dbReference type="GO" id="GO:0019277">
    <property type="term" value="P:UDP-N-acetylgalactosamine biosynthetic process"/>
    <property type="evidence" value="ECO:0007669"/>
    <property type="project" value="InterPro"/>
</dbReference>
<dbReference type="CDD" id="cd01555">
    <property type="entry name" value="UdpNAET"/>
    <property type="match status" value="1"/>
</dbReference>
<dbReference type="FunFam" id="3.65.10.10:FF:000001">
    <property type="entry name" value="UDP-N-acetylglucosamine 1-carboxyvinyltransferase"/>
    <property type="match status" value="1"/>
</dbReference>
<dbReference type="Gene3D" id="3.65.10.10">
    <property type="entry name" value="Enolpyruvate transferase domain"/>
    <property type="match status" value="2"/>
</dbReference>
<dbReference type="HAMAP" id="MF_00111">
    <property type="entry name" value="MurA"/>
    <property type="match status" value="1"/>
</dbReference>
<dbReference type="InterPro" id="IPR001986">
    <property type="entry name" value="Enolpyruvate_Tfrase_dom"/>
</dbReference>
<dbReference type="InterPro" id="IPR036968">
    <property type="entry name" value="Enolpyruvate_Tfrase_sf"/>
</dbReference>
<dbReference type="InterPro" id="IPR050068">
    <property type="entry name" value="MurA_subfamily"/>
</dbReference>
<dbReference type="InterPro" id="IPR013792">
    <property type="entry name" value="RNA3'P_cycl/enolpyr_Trfase_a/b"/>
</dbReference>
<dbReference type="InterPro" id="IPR005750">
    <property type="entry name" value="UDP_GlcNAc_COvinyl_MurA"/>
</dbReference>
<dbReference type="NCBIfam" id="TIGR01072">
    <property type="entry name" value="murA"/>
    <property type="match status" value="1"/>
</dbReference>
<dbReference type="NCBIfam" id="NF006873">
    <property type="entry name" value="PRK09369.1"/>
    <property type="match status" value="1"/>
</dbReference>
<dbReference type="PANTHER" id="PTHR43783">
    <property type="entry name" value="UDP-N-ACETYLGLUCOSAMINE 1-CARBOXYVINYLTRANSFERASE"/>
    <property type="match status" value="1"/>
</dbReference>
<dbReference type="PANTHER" id="PTHR43783:SF1">
    <property type="entry name" value="UDP-N-ACETYLGLUCOSAMINE 1-CARBOXYVINYLTRANSFERASE"/>
    <property type="match status" value="1"/>
</dbReference>
<dbReference type="Pfam" id="PF00275">
    <property type="entry name" value="EPSP_synthase"/>
    <property type="match status" value="1"/>
</dbReference>
<dbReference type="SUPFAM" id="SSF55205">
    <property type="entry name" value="EPT/RTPC-like"/>
    <property type="match status" value="1"/>
</dbReference>
<proteinExistence type="inferred from homology"/>
<comment type="function">
    <text evidence="1">Cell wall formation. Adds enolpyruvyl to UDP-N-acetylglucosamine.</text>
</comment>
<comment type="catalytic activity">
    <reaction evidence="1">
        <text>phosphoenolpyruvate + UDP-N-acetyl-alpha-D-glucosamine = UDP-N-acetyl-3-O-(1-carboxyvinyl)-alpha-D-glucosamine + phosphate</text>
        <dbReference type="Rhea" id="RHEA:18681"/>
        <dbReference type="ChEBI" id="CHEBI:43474"/>
        <dbReference type="ChEBI" id="CHEBI:57705"/>
        <dbReference type="ChEBI" id="CHEBI:58702"/>
        <dbReference type="ChEBI" id="CHEBI:68483"/>
        <dbReference type="EC" id="2.5.1.7"/>
    </reaction>
</comment>
<comment type="pathway">
    <text evidence="1">Cell wall biogenesis; peptidoglycan biosynthesis.</text>
</comment>
<comment type="subcellular location">
    <subcellularLocation>
        <location evidence="1">Cytoplasm</location>
    </subcellularLocation>
</comment>
<comment type="similarity">
    <text evidence="1">Belongs to the EPSP synthase family. MurA subfamily.</text>
</comment>
<evidence type="ECO:0000255" key="1">
    <source>
        <dbReference type="HAMAP-Rule" id="MF_00111"/>
    </source>
</evidence>
<organism>
    <name type="scientific">Caulobacter vibrioides (strain ATCC 19089 / CIP 103742 / CB 15)</name>
    <name type="common">Caulobacter crescentus</name>
    <dbReference type="NCBI Taxonomy" id="190650"/>
    <lineage>
        <taxon>Bacteria</taxon>
        <taxon>Pseudomonadati</taxon>
        <taxon>Pseudomonadota</taxon>
        <taxon>Alphaproteobacteria</taxon>
        <taxon>Caulobacterales</taxon>
        <taxon>Caulobacteraceae</taxon>
        <taxon>Caulobacter</taxon>
    </lineage>
</organism>
<keyword id="KW-0131">Cell cycle</keyword>
<keyword id="KW-0132">Cell division</keyword>
<keyword id="KW-0133">Cell shape</keyword>
<keyword id="KW-0961">Cell wall biogenesis/degradation</keyword>
<keyword id="KW-0963">Cytoplasm</keyword>
<keyword id="KW-0573">Peptidoglycan synthesis</keyword>
<keyword id="KW-0670">Pyruvate</keyword>
<keyword id="KW-1185">Reference proteome</keyword>
<keyword id="KW-0808">Transferase</keyword>
<reference key="1">
    <citation type="journal article" date="2001" name="Proc. Natl. Acad. Sci. U.S.A.">
        <title>Complete genome sequence of Caulobacter crescentus.</title>
        <authorList>
            <person name="Nierman W.C."/>
            <person name="Feldblyum T.V."/>
            <person name="Laub M.T."/>
            <person name="Paulsen I.T."/>
            <person name="Nelson K.E."/>
            <person name="Eisen J.A."/>
            <person name="Heidelberg J.F."/>
            <person name="Alley M.R.K."/>
            <person name="Ohta N."/>
            <person name="Maddock J.R."/>
            <person name="Potocka I."/>
            <person name="Nelson W.C."/>
            <person name="Newton A."/>
            <person name="Stephens C."/>
            <person name="Phadke N.D."/>
            <person name="Ely B."/>
            <person name="DeBoy R.T."/>
            <person name="Dodson R.J."/>
            <person name="Durkin A.S."/>
            <person name="Gwinn M.L."/>
            <person name="Haft D.H."/>
            <person name="Kolonay J.F."/>
            <person name="Smit J."/>
            <person name="Craven M.B."/>
            <person name="Khouri H.M."/>
            <person name="Shetty J."/>
            <person name="Berry K.J."/>
            <person name="Utterback T.R."/>
            <person name="Tran K."/>
            <person name="Wolf A.M."/>
            <person name="Vamathevan J.J."/>
            <person name="Ermolaeva M.D."/>
            <person name="White O."/>
            <person name="Salzberg S.L."/>
            <person name="Venter J.C."/>
            <person name="Shapiro L."/>
            <person name="Fraser C.M."/>
        </authorList>
    </citation>
    <scope>NUCLEOTIDE SEQUENCE [LARGE SCALE GENOMIC DNA]</scope>
    <source>
        <strain>ATCC 19089 / CIP 103742 / CB 15</strain>
    </source>
</reference>
<accession>Q9A5U7</accession>
<sequence length="429" mass="45270">MDRIAIIGGAQLNGTIPVSGAKNSAIKLMAASLLTDEPLRLTNMPRLADTRFLGKLLTRLGVQVTESDGSDGQQTLLHAPEITSGFAPYDLVRQMRASFNVLGPLVARSGQAKVSLPGGCTIGARPVDLHLQAIEALGAKIDLHEGYVYAQAPRGLKGAEIRFPFVSVGATEHAMLAAVLADGVSVIHNAACEPELVDLQECLNAMGAKVEGAGTPTVTITGVPRLHGATHAVIPDRIEMGTYAVAAAMAGGEVRLSNARPGLIDALLDKLKEAGASVEETADGCIIRRNGQRLTAVDIETAPFPGFATDLQAQFMALMTTAKGESRIRETIFENRFMHAPELMRLGADISVSGGEARVRGVDQLEGAQVMATDLRASVSLVIAGLVARGETTVSRIYHLDRGFERLEEKLGACGAQVRRIKGDGEAEL</sequence>
<protein>
    <recommendedName>
        <fullName evidence="1">UDP-N-acetylglucosamine 1-carboxyvinyltransferase</fullName>
        <ecNumber evidence="1">2.5.1.7</ecNumber>
    </recommendedName>
    <alternativeName>
        <fullName evidence="1">Enoylpyruvate transferase</fullName>
    </alternativeName>
    <alternativeName>
        <fullName evidence="1">UDP-N-acetylglucosamine enolpyruvyl transferase</fullName>
        <shortName evidence="1">EPT</shortName>
    </alternativeName>
</protein>
<feature type="chain" id="PRO_0000178858" description="UDP-N-acetylglucosamine 1-carboxyvinyltransferase">
    <location>
        <begin position="1"/>
        <end position="429"/>
    </location>
</feature>
<feature type="active site" description="Proton donor" evidence="1">
    <location>
        <position position="120"/>
    </location>
</feature>
<feature type="binding site" evidence="1">
    <location>
        <begin position="22"/>
        <end position="23"/>
    </location>
    <ligand>
        <name>phosphoenolpyruvate</name>
        <dbReference type="ChEBI" id="CHEBI:58702"/>
    </ligand>
</feature>
<feature type="binding site" evidence="1">
    <location>
        <position position="96"/>
    </location>
    <ligand>
        <name>UDP-N-acetyl-alpha-D-glucosamine</name>
        <dbReference type="ChEBI" id="CHEBI:57705"/>
    </ligand>
</feature>
<feature type="binding site" evidence="1">
    <location>
        <begin position="125"/>
        <end position="129"/>
    </location>
    <ligand>
        <name>UDP-N-acetyl-alpha-D-glucosamine</name>
        <dbReference type="ChEBI" id="CHEBI:57705"/>
    </ligand>
</feature>
<feature type="binding site" evidence="1">
    <location>
        <position position="310"/>
    </location>
    <ligand>
        <name>UDP-N-acetyl-alpha-D-glucosamine</name>
        <dbReference type="ChEBI" id="CHEBI:57705"/>
    </ligand>
</feature>
<feature type="binding site" evidence="1">
    <location>
        <position position="332"/>
    </location>
    <ligand>
        <name>UDP-N-acetyl-alpha-D-glucosamine</name>
        <dbReference type="ChEBI" id="CHEBI:57705"/>
    </ligand>
</feature>
<feature type="modified residue" description="2-(S-cysteinyl)pyruvic acid O-phosphothioketal" evidence="1">
    <location>
        <position position="120"/>
    </location>
</feature>